<proteinExistence type="inferred from homology"/>
<dbReference type="EC" id="5.6.2.2" evidence="1"/>
<dbReference type="EMBL" id="BA000001">
    <property type="protein sequence ID" value="BAA30676.1"/>
    <property type="molecule type" value="Genomic_DNA"/>
</dbReference>
<dbReference type="PIR" id="D71034">
    <property type="entry name" value="D71034"/>
</dbReference>
<dbReference type="RefSeq" id="WP_010885642.1">
    <property type="nucleotide sequence ID" value="NC_000961.1"/>
</dbReference>
<dbReference type="SMR" id="O74020"/>
<dbReference type="STRING" id="70601.gene:9378554"/>
<dbReference type="EnsemblBacteria" id="BAA30676">
    <property type="protein sequence ID" value="BAA30676"/>
    <property type="gene ID" value="BAA30676"/>
</dbReference>
<dbReference type="GeneID" id="1443882"/>
<dbReference type="KEGG" id="pho:PH1564"/>
<dbReference type="eggNOG" id="arCOG01165">
    <property type="taxonomic scope" value="Archaea"/>
</dbReference>
<dbReference type="OrthoDB" id="65493at2157"/>
<dbReference type="Proteomes" id="UP000000752">
    <property type="component" value="Chromosome"/>
</dbReference>
<dbReference type="GO" id="GO:0005524">
    <property type="term" value="F:ATP binding"/>
    <property type="evidence" value="ECO:0007669"/>
    <property type="project" value="UniProtKB-UniRule"/>
</dbReference>
<dbReference type="GO" id="GO:0003677">
    <property type="term" value="F:DNA binding"/>
    <property type="evidence" value="ECO:0007669"/>
    <property type="project" value="UniProtKB-UniRule"/>
</dbReference>
<dbReference type="GO" id="GO:0003918">
    <property type="term" value="F:DNA topoisomerase type II (double strand cut, ATP-hydrolyzing) activity"/>
    <property type="evidence" value="ECO:0007669"/>
    <property type="project" value="UniProtKB-UniRule"/>
</dbReference>
<dbReference type="GO" id="GO:0006265">
    <property type="term" value="P:DNA topological change"/>
    <property type="evidence" value="ECO:0007669"/>
    <property type="project" value="UniProtKB-UniRule"/>
</dbReference>
<dbReference type="CDD" id="cd16933">
    <property type="entry name" value="HATPase_TopVIB-like"/>
    <property type="match status" value="1"/>
</dbReference>
<dbReference type="CDD" id="cd00823">
    <property type="entry name" value="TopoIIB_Trans"/>
    <property type="match status" value="1"/>
</dbReference>
<dbReference type="FunFam" id="3.30.565.10:FF:000062">
    <property type="entry name" value="Type 2 DNA topoisomerase 6 subunit B"/>
    <property type="match status" value="1"/>
</dbReference>
<dbReference type="Gene3D" id="1.10.8.50">
    <property type="match status" value="1"/>
</dbReference>
<dbReference type="Gene3D" id="3.30.230.10">
    <property type="match status" value="1"/>
</dbReference>
<dbReference type="Gene3D" id="3.30.565.10">
    <property type="entry name" value="Histidine kinase-like ATPase, C-terminal domain"/>
    <property type="match status" value="1"/>
</dbReference>
<dbReference type="HAMAP" id="MF_00322">
    <property type="entry name" value="Top6B"/>
    <property type="match status" value="1"/>
</dbReference>
<dbReference type="InterPro" id="IPR036890">
    <property type="entry name" value="HATPase_C_sf"/>
</dbReference>
<dbReference type="InterPro" id="IPR020568">
    <property type="entry name" value="Ribosomal_Su5_D2-typ_SF"/>
</dbReference>
<dbReference type="InterPro" id="IPR014721">
    <property type="entry name" value="Ribsml_uS5_D2-typ_fold_subgr"/>
</dbReference>
<dbReference type="InterPro" id="IPR005734">
    <property type="entry name" value="TopoVI_B"/>
</dbReference>
<dbReference type="InterPro" id="IPR015320">
    <property type="entry name" value="TopoVI_B_transducer"/>
</dbReference>
<dbReference type="NCBIfam" id="NF003218">
    <property type="entry name" value="PRK04184.1"/>
    <property type="match status" value="1"/>
</dbReference>
<dbReference type="NCBIfam" id="TIGR01052">
    <property type="entry name" value="top6b"/>
    <property type="match status" value="1"/>
</dbReference>
<dbReference type="PANTHER" id="PTHR48444">
    <property type="entry name" value="DNA TOPOISOMERASE 6 SUBUNIT B"/>
    <property type="match status" value="1"/>
</dbReference>
<dbReference type="PANTHER" id="PTHR48444:SF1">
    <property type="entry name" value="DNA TOPOISOMERASE 6 SUBUNIT B"/>
    <property type="match status" value="1"/>
</dbReference>
<dbReference type="Pfam" id="PF02518">
    <property type="entry name" value="HATPase_c"/>
    <property type="match status" value="1"/>
</dbReference>
<dbReference type="Pfam" id="PF09239">
    <property type="entry name" value="Topo-VIb_trans"/>
    <property type="match status" value="1"/>
</dbReference>
<dbReference type="PIRSF" id="PIRSF006553">
    <property type="entry name" value="TopoVI_B"/>
    <property type="match status" value="1"/>
</dbReference>
<dbReference type="SMART" id="SM00387">
    <property type="entry name" value="HATPase_c"/>
    <property type="match status" value="1"/>
</dbReference>
<dbReference type="SUPFAM" id="SSF55874">
    <property type="entry name" value="ATPase domain of HSP90 chaperone/DNA topoisomerase II/histidine kinase"/>
    <property type="match status" value="1"/>
</dbReference>
<dbReference type="SUPFAM" id="SSF54211">
    <property type="entry name" value="Ribosomal protein S5 domain 2-like"/>
    <property type="match status" value="1"/>
</dbReference>
<keyword id="KW-0067">ATP-binding</keyword>
<keyword id="KW-0238">DNA-binding</keyword>
<keyword id="KW-0413">Isomerase</keyword>
<keyword id="KW-0547">Nucleotide-binding</keyword>
<keyword id="KW-0799">Topoisomerase</keyword>
<organism>
    <name type="scientific">Pyrococcus horikoshii (strain ATCC 700860 / DSM 12428 / JCM 9974 / NBRC 100139 / OT-3)</name>
    <dbReference type="NCBI Taxonomy" id="70601"/>
    <lineage>
        <taxon>Archaea</taxon>
        <taxon>Methanobacteriati</taxon>
        <taxon>Methanobacteriota</taxon>
        <taxon>Thermococci</taxon>
        <taxon>Thermococcales</taxon>
        <taxon>Thermococcaceae</taxon>
        <taxon>Pyrococcus</taxon>
    </lineage>
</organism>
<name>TOP6B_PYRHO</name>
<sequence length="564" mass="63888">MAEAKDLFKEFKVQSVSEFFRRNAAMLGYTGKIRSLTTIIHEAVTNSLDACEEAGILPTIRVEIEELGKEHYKVIVEDNGPGIPEEYIPHVFGKMLAGTKAHRNIQSRGQQGIGISGAVMFAQITTGKPTRVITSTGGEIVEAWVKIDVQKNEGKIVKKVKHPNPKGWRGTRIEMEVKDVKYVRSRQGVYWYLKLTAIANPHAYIELVEPDGKLVVFPRSSEEIPKPPVEMKPHPKGVMVDDVYTMAHRSKRSSVKRFLVSEFSRISEKKIEELIKYVAAIRLLKSEQNEEIKEKLREKLINGDVDSVLRSFGRKWKKEVEKVAKIMEKPPEKLTWQEAEEIVEAFKLMKFLAPPTHGLRPIGEENIKRGLTGILKPEFVTAVTRSPKVYAGGIPFQVEVGLAYGGQISGSEILRYANRVPLLFDAGSCVITSAVRSIDWKRYKIDSFDSAPLVVLVNVISVHVPYTSTGKQSIADIEEIYNEIRLALMDAARKLALYLGGKYRRMYQIKRRKTLEKYLPEIARSLHILTGEPEEKIREYFLKLIESKIEVEEVESVEVEEAEA</sequence>
<protein>
    <recommendedName>
        <fullName evidence="1">Type 2 DNA topoisomerase 6 subunit B</fullName>
        <ecNumber evidence="1">5.6.2.2</ecNumber>
    </recommendedName>
    <alternativeName>
        <fullName evidence="1">Type II DNA topoisomerase VI subunit B</fullName>
        <shortName evidence="1">TopoVI-B</shortName>
    </alternativeName>
</protein>
<evidence type="ECO:0000255" key="1">
    <source>
        <dbReference type="HAMAP-Rule" id="MF_00322"/>
    </source>
</evidence>
<accession>O74020</accession>
<accession>O59208</accession>
<feature type="chain" id="PRO_0000145468" description="Type 2 DNA topoisomerase 6 subunit B">
    <location>
        <begin position="1"/>
        <end position="564"/>
    </location>
</feature>
<feature type="binding site" evidence="1">
    <location>
        <position position="46"/>
    </location>
    <ligand>
        <name>ATP</name>
        <dbReference type="ChEBI" id="CHEBI:30616"/>
    </ligand>
</feature>
<feature type="binding site" evidence="1">
    <location>
        <position position="78"/>
    </location>
    <ligand>
        <name>ATP</name>
        <dbReference type="ChEBI" id="CHEBI:30616"/>
    </ligand>
</feature>
<feature type="binding site" evidence="1">
    <location>
        <begin position="99"/>
        <end position="100"/>
    </location>
    <ligand>
        <name>ATP</name>
        <dbReference type="ChEBI" id="CHEBI:30616"/>
    </ligand>
</feature>
<feature type="binding site" evidence="1">
    <location>
        <begin position="109"/>
        <end position="116"/>
    </location>
    <ligand>
        <name>ATP</name>
        <dbReference type="ChEBI" id="CHEBI:30616"/>
    </ligand>
</feature>
<feature type="binding site" evidence="1">
    <location>
        <position position="471"/>
    </location>
    <ligand>
        <name>ATP</name>
        <dbReference type="ChEBI" id="CHEBI:30616"/>
    </ligand>
</feature>
<comment type="function">
    <text evidence="1">Relaxes both positive and negative superturns and exhibits a strong decatenase activity.</text>
</comment>
<comment type="catalytic activity">
    <reaction evidence="1">
        <text>ATP-dependent breakage, passage and rejoining of double-stranded DNA.</text>
        <dbReference type="EC" id="5.6.2.2"/>
    </reaction>
</comment>
<comment type="subunit">
    <text evidence="1">Homodimer. Heterotetramer of two Top6A and two Top6B chains.</text>
</comment>
<comment type="similarity">
    <text evidence="1">Belongs to the TOP6B family.</text>
</comment>
<reference key="1">
    <citation type="journal article" date="1998" name="DNA Res.">
        <title>Complete sequence and gene organization of the genome of a hyper-thermophilic archaebacterium, Pyrococcus horikoshii OT3.</title>
        <authorList>
            <person name="Kawarabayasi Y."/>
            <person name="Sawada M."/>
            <person name="Horikawa H."/>
            <person name="Haikawa Y."/>
            <person name="Hino Y."/>
            <person name="Yamamoto S."/>
            <person name="Sekine M."/>
            <person name="Baba S."/>
            <person name="Kosugi H."/>
            <person name="Hosoyama A."/>
            <person name="Nagai Y."/>
            <person name="Sakai M."/>
            <person name="Ogura K."/>
            <person name="Otsuka R."/>
            <person name="Nakazawa H."/>
            <person name="Takamiya M."/>
            <person name="Ohfuku Y."/>
            <person name="Funahashi T."/>
            <person name="Tanaka T."/>
            <person name="Kudoh Y."/>
            <person name="Yamazaki J."/>
            <person name="Kushida N."/>
            <person name="Oguchi A."/>
            <person name="Aoki K."/>
            <person name="Yoshizawa T."/>
            <person name="Nakamura Y."/>
            <person name="Robb F.T."/>
            <person name="Horikoshi K."/>
            <person name="Masuchi Y."/>
            <person name="Shizuya H."/>
            <person name="Kikuchi H."/>
        </authorList>
    </citation>
    <scope>NUCLEOTIDE SEQUENCE [LARGE SCALE GENOMIC DNA]</scope>
    <source>
        <strain>ATCC 700860 / DSM 12428 / JCM 9974 / NBRC 100139 / OT-3</strain>
    </source>
</reference>
<gene>
    <name evidence="1" type="primary">top6B</name>
    <name type="ordered locus">PH1564</name>
</gene>